<reference key="1">
    <citation type="journal article" date="2004" name="Proc. Natl. Acad. Sci. U.S.A.">
        <title>Genome sequence of the enterobacterial phytopathogen Erwinia carotovora subsp. atroseptica and characterization of virulence factors.</title>
        <authorList>
            <person name="Bell K.S."/>
            <person name="Sebaihia M."/>
            <person name="Pritchard L."/>
            <person name="Holden M.T.G."/>
            <person name="Hyman L.J."/>
            <person name="Holeva M.C."/>
            <person name="Thomson N.R."/>
            <person name="Bentley S.D."/>
            <person name="Churcher L.J.C."/>
            <person name="Mungall K."/>
            <person name="Atkin R."/>
            <person name="Bason N."/>
            <person name="Brooks K."/>
            <person name="Chillingworth T."/>
            <person name="Clark K."/>
            <person name="Doggett J."/>
            <person name="Fraser A."/>
            <person name="Hance Z."/>
            <person name="Hauser H."/>
            <person name="Jagels K."/>
            <person name="Moule S."/>
            <person name="Norbertczak H."/>
            <person name="Ormond D."/>
            <person name="Price C."/>
            <person name="Quail M.A."/>
            <person name="Sanders M."/>
            <person name="Walker D."/>
            <person name="Whitehead S."/>
            <person name="Salmond G.P.C."/>
            <person name="Birch P.R.J."/>
            <person name="Parkhill J."/>
            <person name="Toth I.K."/>
        </authorList>
    </citation>
    <scope>NUCLEOTIDE SEQUENCE [LARGE SCALE GENOMIC DNA]</scope>
    <source>
        <strain>SCRI 1043 / ATCC BAA-672</strain>
    </source>
</reference>
<keyword id="KW-0997">Cell inner membrane</keyword>
<keyword id="KW-1003">Cell membrane</keyword>
<keyword id="KW-0472">Membrane</keyword>
<keyword id="KW-1185">Reference proteome</keyword>
<keyword id="KW-0808">Transferase</keyword>
<keyword id="KW-0812">Transmembrane</keyword>
<keyword id="KW-1133">Transmembrane helix</keyword>
<proteinExistence type="inferred from homology"/>
<comment type="function">
    <text evidence="1">Catalyzes the transfer of the diacylglyceryl group from phosphatidylglycerol to the sulfhydryl group of the N-terminal cysteine of a prolipoprotein, the first step in the formation of mature lipoproteins.</text>
</comment>
<comment type="catalytic activity">
    <reaction evidence="1">
        <text>L-cysteinyl-[prolipoprotein] + a 1,2-diacyl-sn-glycero-3-phospho-(1'-sn-glycerol) = an S-1,2-diacyl-sn-glyceryl-L-cysteinyl-[prolipoprotein] + sn-glycerol 1-phosphate + H(+)</text>
        <dbReference type="Rhea" id="RHEA:56712"/>
        <dbReference type="Rhea" id="RHEA-COMP:14679"/>
        <dbReference type="Rhea" id="RHEA-COMP:14680"/>
        <dbReference type="ChEBI" id="CHEBI:15378"/>
        <dbReference type="ChEBI" id="CHEBI:29950"/>
        <dbReference type="ChEBI" id="CHEBI:57685"/>
        <dbReference type="ChEBI" id="CHEBI:64716"/>
        <dbReference type="ChEBI" id="CHEBI:140658"/>
        <dbReference type="EC" id="2.5.1.145"/>
    </reaction>
</comment>
<comment type="pathway">
    <text evidence="1">Protein modification; lipoprotein biosynthesis (diacylglyceryl transfer).</text>
</comment>
<comment type="subcellular location">
    <subcellularLocation>
        <location evidence="1">Cell inner membrane</location>
        <topology evidence="1">Multi-pass membrane protein</topology>
    </subcellularLocation>
</comment>
<comment type="similarity">
    <text evidence="1">Belongs to the Lgt family.</text>
</comment>
<organism>
    <name type="scientific">Pectobacterium atrosepticum (strain SCRI 1043 / ATCC BAA-672)</name>
    <name type="common">Erwinia carotovora subsp. atroseptica</name>
    <dbReference type="NCBI Taxonomy" id="218491"/>
    <lineage>
        <taxon>Bacteria</taxon>
        <taxon>Pseudomonadati</taxon>
        <taxon>Pseudomonadota</taxon>
        <taxon>Gammaproteobacteria</taxon>
        <taxon>Enterobacterales</taxon>
        <taxon>Pectobacteriaceae</taxon>
        <taxon>Pectobacterium</taxon>
    </lineage>
</organism>
<sequence length="289" mass="32864">MMTTSYLAFPQFDPVIFSIGPLALHWYGLMYLVGFVFAMWLAVRRANKPGSGWTKDEVENLLYMGFLGVFVGGRLGYVLFYAFPSFLENPLYLFKVWDGGMSFHGGLMGVICVMLWFAHRTKRHFFQVADFIAPLIPFGLGAGRLGNFINGELWGRVTTDTPWAMLFPGSRSEDMMLAVSNPQWQTIFNQFGMLPRHPSQLYQMMLEGVALFIILNLFIRKSRPMGSVSGLFLICYGMFRIITEFFRQPDAQLGLFGGLFSMGQILSLPMVLAGILMMVWAYRRQPAQQ</sequence>
<accession>Q6D8I7</accession>
<gene>
    <name evidence="1" type="primary">lgt</name>
    <name type="ordered locus">ECA0987</name>
</gene>
<protein>
    <recommendedName>
        <fullName evidence="1">Phosphatidylglycerol--prolipoprotein diacylglyceryl transferase</fullName>
        <ecNumber evidence="1">2.5.1.145</ecNumber>
    </recommendedName>
</protein>
<feature type="chain" id="PRO_0000172602" description="Phosphatidylglycerol--prolipoprotein diacylglyceryl transferase">
    <location>
        <begin position="1"/>
        <end position="289"/>
    </location>
</feature>
<feature type="transmembrane region" description="Helical" evidence="1">
    <location>
        <begin position="23"/>
        <end position="43"/>
    </location>
</feature>
<feature type="transmembrane region" description="Helical" evidence="1">
    <location>
        <begin position="61"/>
        <end position="81"/>
    </location>
</feature>
<feature type="transmembrane region" description="Helical" evidence="1">
    <location>
        <begin position="99"/>
        <end position="119"/>
    </location>
</feature>
<feature type="transmembrane region" description="Helical" evidence="1">
    <location>
        <begin position="125"/>
        <end position="145"/>
    </location>
</feature>
<feature type="transmembrane region" description="Helical" evidence="1">
    <location>
        <begin position="199"/>
        <end position="219"/>
    </location>
</feature>
<feature type="transmembrane region" description="Helical" evidence="1">
    <location>
        <begin position="226"/>
        <end position="246"/>
    </location>
</feature>
<feature type="transmembrane region" description="Helical" evidence="1">
    <location>
        <begin position="259"/>
        <end position="279"/>
    </location>
</feature>
<feature type="binding site" evidence="1">
    <location>
        <position position="144"/>
    </location>
    <ligand>
        <name>a 1,2-diacyl-sn-glycero-3-phospho-(1'-sn-glycerol)</name>
        <dbReference type="ChEBI" id="CHEBI:64716"/>
    </ligand>
</feature>
<name>LGT_PECAS</name>
<evidence type="ECO:0000255" key="1">
    <source>
        <dbReference type="HAMAP-Rule" id="MF_01147"/>
    </source>
</evidence>
<dbReference type="EC" id="2.5.1.145" evidence="1"/>
<dbReference type="EMBL" id="BX950851">
    <property type="protein sequence ID" value="CAG73898.1"/>
    <property type="molecule type" value="Genomic_DNA"/>
</dbReference>
<dbReference type="SMR" id="Q6D8I7"/>
<dbReference type="STRING" id="218491.ECA0987"/>
<dbReference type="KEGG" id="eca:ECA0987"/>
<dbReference type="eggNOG" id="COG0682">
    <property type="taxonomic scope" value="Bacteria"/>
</dbReference>
<dbReference type="HOGENOM" id="CLU_013386_1_0_6"/>
<dbReference type="UniPathway" id="UPA00664"/>
<dbReference type="Proteomes" id="UP000007966">
    <property type="component" value="Chromosome"/>
</dbReference>
<dbReference type="GO" id="GO:0005886">
    <property type="term" value="C:plasma membrane"/>
    <property type="evidence" value="ECO:0007669"/>
    <property type="project" value="UniProtKB-SubCell"/>
</dbReference>
<dbReference type="GO" id="GO:0008961">
    <property type="term" value="F:phosphatidylglycerol-prolipoprotein diacylglyceryl transferase activity"/>
    <property type="evidence" value="ECO:0007669"/>
    <property type="project" value="UniProtKB-UniRule"/>
</dbReference>
<dbReference type="GO" id="GO:0042158">
    <property type="term" value="P:lipoprotein biosynthetic process"/>
    <property type="evidence" value="ECO:0007669"/>
    <property type="project" value="UniProtKB-UniRule"/>
</dbReference>
<dbReference type="HAMAP" id="MF_01147">
    <property type="entry name" value="Lgt"/>
    <property type="match status" value="1"/>
</dbReference>
<dbReference type="InterPro" id="IPR001640">
    <property type="entry name" value="Lgt"/>
</dbReference>
<dbReference type="NCBIfam" id="TIGR00544">
    <property type="entry name" value="lgt"/>
    <property type="match status" value="1"/>
</dbReference>
<dbReference type="PANTHER" id="PTHR30589:SF0">
    <property type="entry name" value="PHOSPHATIDYLGLYCEROL--PROLIPOPROTEIN DIACYLGLYCERYL TRANSFERASE"/>
    <property type="match status" value="1"/>
</dbReference>
<dbReference type="PANTHER" id="PTHR30589">
    <property type="entry name" value="PROLIPOPROTEIN DIACYLGLYCERYL TRANSFERASE"/>
    <property type="match status" value="1"/>
</dbReference>
<dbReference type="Pfam" id="PF01790">
    <property type="entry name" value="LGT"/>
    <property type="match status" value="1"/>
</dbReference>
<dbReference type="PROSITE" id="PS01311">
    <property type="entry name" value="LGT"/>
    <property type="match status" value="1"/>
</dbReference>